<accession>Q27638</accession>
<protein>
    <recommendedName>
        <fullName>Glucose-6-phosphate 1-dehydrogenase</fullName>
        <shortName>G6PD</shortName>
        <ecNumber evidence="2">1.1.1.49</ecNumber>
    </recommendedName>
</protein>
<proteinExistence type="inferred from homology"/>
<reference key="1">
    <citation type="submission" date="1996-05" db="EMBL/GenBank/DDBJ databases">
        <authorList>
            <person name="Eanes W.F."/>
            <person name="Kirchner M."/>
            <person name="Yoon J."/>
            <person name="Biermann C."/>
            <person name="Wang I."/>
            <person name="McCartney M."/>
            <person name="Verrelli B.C."/>
        </authorList>
    </citation>
    <scope>NUCLEOTIDE SEQUENCE [GENOMIC DNA]</scope>
    <source>
        <strain>BG1016</strain>
    </source>
</reference>
<feature type="chain" id="PRO_0000068094" description="Glucose-6-phosphate 1-dehydrogenase">
    <location>
        <begin position="1" status="less than"/>
        <end position="518"/>
    </location>
</feature>
<feature type="active site" description="Proton acceptor" evidence="1">
    <location>
        <position position="261"/>
    </location>
</feature>
<feature type="binding site" evidence="2">
    <location>
        <begin position="36"/>
        <end position="43"/>
    </location>
    <ligand>
        <name>NADP(+)</name>
        <dbReference type="ChEBI" id="CHEBI:58349"/>
        <label>1</label>
    </ligand>
</feature>
<feature type="binding site" evidence="2">
    <location>
        <position position="70"/>
    </location>
    <ligand>
        <name>NADP(+)</name>
        <dbReference type="ChEBI" id="CHEBI:58349"/>
        <label>1</label>
    </ligand>
</feature>
<feature type="binding site" evidence="2">
    <location>
        <position position="169"/>
    </location>
    <ligand>
        <name>D-glucose 6-phosphate</name>
        <dbReference type="ChEBI" id="CHEBI:61548"/>
    </ligand>
</feature>
<feature type="binding site" evidence="2">
    <location>
        <position position="169"/>
    </location>
    <ligand>
        <name>NADP(+)</name>
        <dbReference type="ChEBI" id="CHEBI:58349"/>
        <label>1</label>
    </ligand>
</feature>
<feature type="binding site" evidence="2">
    <location>
        <begin position="199"/>
        <end position="203"/>
    </location>
    <ligand>
        <name>D-glucose 6-phosphate</name>
        <dbReference type="ChEBI" id="CHEBI:61548"/>
    </ligand>
</feature>
<feature type="binding site" evidence="2">
    <location>
        <position position="237"/>
    </location>
    <ligand>
        <name>D-glucose 6-phosphate</name>
        <dbReference type="ChEBI" id="CHEBI:61548"/>
    </ligand>
</feature>
<feature type="binding site" evidence="2">
    <location>
        <position position="256"/>
    </location>
    <ligand>
        <name>D-glucose 6-phosphate</name>
        <dbReference type="ChEBI" id="CHEBI:61548"/>
    </ligand>
</feature>
<feature type="binding site" evidence="2">
    <location>
        <position position="356"/>
    </location>
    <ligand>
        <name>NADP(+)</name>
        <dbReference type="ChEBI" id="CHEBI:58349"/>
        <label>2</label>
    </ligand>
</feature>
<feature type="binding site" evidence="2">
    <location>
        <position position="359"/>
    </location>
    <ligand>
        <name>D-glucose 6-phosphate</name>
        <dbReference type="ChEBI" id="CHEBI:61548"/>
    </ligand>
</feature>
<feature type="binding site" evidence="2">
    <location>
        <position position="364"/>
    </location>
    <ligand>
        <name>D-glucose 6-phosphate</name>
        <dbReference type="ChEBI" id="CHEBI:61548"/>
    </ligand>
</feature>
<feature type="binding site" evidence="2">
    <location>
        <position position="365"/>
    </location>
    <ligand>
        <name>NADP(+)</name>
        <dbReference type="ChEBI" id="CHEBI:58349"/>
        <label>2</label>
    </ligand>
</feature>
<feature type="binding site" evidence="2">
    <location>
        <position position="369"/>
    </location>
    <ligand>
        <name>NADP(+)</name>
        <dbReference type="ChEBI" id="CHEBI:58349"/>
        <label>2</label>
    </ligand>
</feature>
<feature type="binding site" evidence="2">
    <location>
        <position position="392"/>
    </location>
    <ligand>
        <name>NADP(+)</name>
        <dbReference type="ChEBI" id="CHEBI:58349"/>
        <label>2</label>
    </ligand>
</feature>
<feature type="binding site" evidence="2">
    <location>
        <position position="394"/>
    </location>
    <ligand>
        <name>D-glucose 6-phosphate</name>
        <dbReference type="ChEBI" id="CHEBI:61548"/>
    </ligand>
</feature>
<feature type="binding site" evidence="2">
    <location>
        <begin position="400"/>
        <end position="402"/>
    </location>
    <ligand>
        <name>NADP(+)</name>
        <dbReference type="ChEBI" id="CHEBI:58349"/>
        <label>2</label>
    </ligand>
</feature>
<feature type="binding site" evidence="2">
    <location>
        <begin position="420"/>
        <end position="422"/>
    </location>
    <ligand>
        <name>NADP(+)</name>
        <dbReference type="ChEBI" id="CHEBI:58349"/>
        <label>2</label>
    </ligand>
</feature>
<feature type="binding site" evidence="2">
    <location>
        <position position="486"/>
    </location>
    <ligand>
        <name>NADP(+)</name>
        <dbReference type="ChEBI" id="CHEBI:58349"/>
        <label>2</label>
    </ligand>
</feature>
<feature type="binding site" evidence="2">
    <location>
        <position position="502"/>
    </location>
    <ligand>
        <name>NADP(+)</name>
        <dbReference type="ChEBI" id="CHEBI:58349"/>
        <label>2</label>
    </ligand>
</feature>
<feature type="binding site" evidence="2">
    <location>
        <position position="508"/>
    </location>
    <ligand>
        <name>NADP(+)</name>
        <dbReference type="ChEBI" id="CHEBI:58349"/>
        <label>2</label>
    </ligand>
</feature>
<feature type="non-terminal residue">
    <location>
        <position position="1"/>
    </location>
</feature>
<gene>
    <name type="primary">Zw</name>
    <name type="synonym">G6pd</name>
</gene>
<comment type="function">
    <text evidence="2">Cytosolic glucose-6-phosphate dehydrogenase that catalyzes the first and rate-limiting step of the oxidative branch within the pentose phosphate pathway/shunt, an alternative route to glycolysis for the dissimilation of carbohydrates and a major source of reducing power and metabolic intermediates for fatty acid and nucleic acid biosynthetic processes.</text>
</comment>
<comment type="catalytic activity">
    <reaction evidence="2">
        <text>D-glucose 6-phosphate + NADP(+) = 6-phospho-D-glucono-1,5-lactone + NADPH + H(+)</text>
        <dbReference type="Rhea" id="RHEA:15841"/>
        <dbReference type="ChEBI" id="CHEBI:15378"/>
        <dbReference type="ChEBI" id="CHEBI:57783"/>
        <dbReference type="ChEBI" id="CHEBI:57955"/>
        <dbReference type="ChEBI" id="CHEBI:58349"/>
        <dbReference type="ChEBI" id="CHEBI:61548"/>
        <dbReference type="EC" id="1.1.1.49"/>
    </reaction>
    <physiologicalReaction direction="left-to-right" evidence="2">
        <dbReference type="Rhea" id="RHEA:15842"/>
    </physiologicalReaction>
</comment>
<comment type="pathway">
    <text evidence="2">Carbohydrate degradation; pentose phosphate pathway; D-ribulose 5-phosphate from D-glucose 6-phosphate (oxidative stage): step 1/3.</text>
</comment>
<comment type="subcellular location">
    <subcellularLocation>
        <location evidence="2">Cytoplasm</location>
        <location evidence="2">Cytosol</location>
    </subcellularLocation>
</comment>
<comment type="similarity">
    <text evidence="3">Belongs to the glucose-6-phosphate dehydrogenase family.</text>
</comment>
<name>G6PD_DROYA</name>
<dbReference type="EC" id="1.1.1.49" evidence="2"/>
<dbReference type="EMBL" id="U42750">
    <property type="protein sequence ID" value="AAB02813.1"/>
    <property type="molecule type" value="Genomic_DNA"/>
</dbReference>
<dbReference type="SMR" id="Q27638"/>
<dbReference type="eggNOG" id="KOG0563">
    <property type="taxonomic scope" value="Eukaryota"/>
</dbReference>
<dbReference type="OrthoDB" id="60984at2759"/>
<dbReference type="UniPathway" id="UPA00115">
    <property type="reaction ID" value="UER00408"/>
</dbReference>
<dbReference type="GO" id="GO:0005829">
    <property type="term" value="C:cytosol"/>
    <property type="evidence" value="ECO:0007669"/>
    <property type="project" value="UniProtKB-SubCell"/>
</dbReference>
<dbReference type="GO" id="GO:0004345">
    <property type="term" value="F:glucose-6-phosphate dehydrogenase activity"/>
    <property type="evidence" value="ECO:0000250"/>
    <property type="project" value="UniProtKB"/>
</dbReference>
<dbReference type="GO" id="GO:0050661">
    <property type="term" value="F:NADP binding"/>
    <property type="evidence" value="ECO:0007669"/>
    <property type="project" value="InterPro"/>
</dbReference>
<dbReference type="GO" id="GO:0051156">
    <property type="term" value="P:glucose 6-phosphate metabolic process"/>
    <property type="evidence" value="ECO:0000250"/>
    <property type="project" value="UniProtKB"/>
</dbReference>
<dbReference type="GO" id="GO:0006006">
    <property type="term" value="P:glucose metabolic process"/>
    <property type="evidence" value="ECO:0007669"/>
    <property type="project" value="UniProtKB-KW"/>
</dbReference>
<dbReference type="GO" id="GO:0006739">
    <property type="term" value="P:NADP metabolic process"/>
    <property type="evidence" value="ECO:0000250"/>
    <property type="project" value="UniProtKB"/>
</dbReference>
<dbReference type="GO" id="GO:0009051">
    <property type="term" value="P:pentose-phosphate shunt, oxidative branch"/>
    <property type="evidence" value="ECO:0007669"/>
    <property type="project" value="EnsemblMetazoa"/>
</dbReference>
<dbReference type="FunFam" id="3.30.360.10:FF:000013">
    <property type="entry name" value="Glucose-6-phosphate 1-dehydrogenase"/>
    <property type="match status" value="1"/>
</dbReference>
<dbReference type="FunFam" id="3.40.50.720:FF:000111">
    <property type="entry name" value="Glucose-6-phosphate 1-dehydrogenase"/>
    <property type="match status" value="1"/>
</dbReference>
<dbReference type="Gene3D" id="3.30.360.10">
    <property type="entry name" value="Dihydrodipicolinate Reductase, domain 2"/>
    <property type="match status" value="1"/>
</dbReference>
<dbReference type="Gene3D" id="3.40.50.720">
    <property type="entry name" value="NAD(P)-binding Rossmann-like Domain"/>
    <property type="match status" value="1"/>
</dbReference>
<dbReference type="HAMAP" id="MF_00966">
    <property type="entry name" value="G6PD"/>
    <property type="match status" value="1"/>
</dbReference>
<dbReference type="InterPro" id="IPR001282">
    <property type="entry name" value="G6P_DH"/>
</dbReference>
<dbReference type="InterPro" id="IPR019796">
    <property type="entry name" value="G6P_DH_AS"/>
</dbReference>
<dbReference type="InterPro" id="IPR022675">
    <property type="entry name" value="G6P_DH_C"/>
</dbReference>
<dbReference type="InterPro" id="IPR022674">
    <property type="entry name" value="G6P_DH_NAD-bd"/>
</dbReference>
<dbReference type="InterPro" id="IPR036291">
    <property type="entry name" value="NAD(P)-bd_dom_sf"/>
</dbReference>
<dbReference type="NCBIfam" id="TIGR00871">
    <property type="entry name" value="zwf"/>
    <property type="match status" value="1"/>
</dbReference>
<dbReference type="PANTHER" id="PTHR23429:SF0">
    <property type="entry name" value="GLUCOSE-6-PHOSPHATE 1-DEHYDROGENASE"/>
    <property type="match status" value="1"/>
</dbReference>
<dbReference type="PANTHER" id="PTHR23429">
    <property type="entry name" value="GLUCOSE-6-PHOSPHATE 1-DEHYDROGENASE G6PD"/>
    <property type="match status" value="1"/>
</dbReference>
<dbReference type="Pfam" id="PF02781">
    <property type="entry name" value="G6PD_C"/>
    <property type="match status" value="1"/>
</dbReference>
<dbReference type="Pfam" id="PF00479">
    <property type="entry name" value="G6PD_N"/>
    <property type="match status" value="1"/>
</dbReference>
<dbReference type="PIRSF" id="PIRSF000110">
    <property type="entry name" value="G6PD"/>
    <property type="match status" value="1"/>
</dbReference>
<dbReference type="PRINTS" id="PR00079">
    <property type="entry name" value="G6PDHDRGNASE"/>
</dbReference>
<dbReference type="SUPFAM" id="SSF55347">
    <property type="entry name" value="Glyceraldehyde-3-phosphate dehydrogenase-like, C-terminal domain"/>
    <property type="match status" value="1"/>
</dbReference>
<dbReference type="SUPFAM" id="SSF51735">
    <property type="entry name" value="NAD(P)-binding Rossmann-fold domains"/>
    <property type="match status" value="1"/>
</dbReference>
<dbReference type="PROSITE" id="PS00069">
    <property type="entry name" value="G6P_DEHYDROGENASE"/>
    <property type="match status" value="1"/>
</dbReference>
<evidence type="ECO:0000250" key="1">
    <source>
        <dbReference type="UniProtKB" id="P11411"/>
    </source>
</evidence>
<evidence type="ECO:0000250" key="2">
    <source>
        <dbReference type="UniProtKB" id="P11413"/>
    </source>
</evidence>
<evidence type="ECO:0000305" key="3"/>
<sequence>DHTALDLIIKSLKSPTMVCEGTHFDGKIPHTFVIFGASGDLAKKKIYPKLWWFYRDDLLPKLTKFCGYARSMLTVDSIKEQCLPYMKVQSHEQKKYEEFWALNEYVSGRYDGRTGFELLNQQLELMENKNKANRIFYLALPPSVFEEVTVNIKQICMSVCGWNRVIIEKPFGRDDASSQALSDHLAALFHEDQLYRIDHYLGKEMVQNLMTIRFGNKILSSTWNRENIASVLITFKEPFGTQGRGGYFDEFGIIRDVMQNHLLQILSLVAMEKPVSCHPDDIRDEKVKVLKSIETLTLKDMVLGQYLGNPQGTTDDARTGYVEDPTVSDDSNTPTYALGVLKINNERWQGVPFILRCGKRLNERKAEVRIQYQDVPGDIFEGNTKRNELVIRVQPGEALYFKMMTKSPGITFDIEETELDLTYEHRYKDSYLPDAYERLILDVFCGSQMHFVRSDQLREAWRIFTPILHQIEREHIRPITYQYGSRGPKEADRMCEENNFKYSGSYKWHGGKAATSNL</sequence>
<keyword id="KW-0119">Carbohydrate metabolism</keyword>
<keyword id="KW-0963">Cytoplasm</keyword>
<keyword id="KW-0313">Glucose metabolism</keyword>
<keyword id="KW-0521">NADP</keyword>
<keyword id="KW-0560">Oxidoreductase</keyword>
<organism>
    <name type="scientific">Drosophila yakuba</name>
    <name type="common">Fruit fly</name>
    <dbReference type="NCBI Taxonomy" id="7245"/>
    <lineage>
        <taxon>Eukaryota</taxon>
        <taxon>Metazoa</taxon>
        <taxon>Ecdysozoa</taxon>
        <taxon>Arthropoda</taxon>
        <taxon>Hexapoda</taxon>
        <taxon>Insecta</taxon>
        <taxon>Pterygota</taxon>
        <taxon>Neoptera</taxon>
        <taxon>Endopterygota</taxon>
        <taxon>Diptera</taxon>
        <taxon>Brachycera</taxon>
        <taxon>Muscomorpha</taxon>
        <taxon>Ephydroidea</taxon>
        <taxon>Drosophilidae</taxon>
        <taxon>Drosophila</taxon>
        <taxon>Sophophora</taxon>
    </lineage>
</organism>